<sequence>MIYGIGTDIVSLKRIVRLSKKFGQAFAERILTPEELLEFPQAGKPVNYLAKRFAAKEAFAKAVGTGIRGAVSFRNIGIGHDALGKPEFFYAPALSKWLEEQGISRVSLSMSDEEDTVLAFAVAEK</sequence>
<comment type="function">
    <text evidence="1">Transfers the 4'-phosphopantetheine moiety from coenzyme A to a Ser of acyl-carrier-protein.</text>
</comment>
<comment type="catalytic activity">
    <reaction evidence="1">
        <text>apo-[ACP] + CoA = holo-[ACP] + adenosine 3',5'-bisphosphate + H(+)</text>
        <dbReference type="Rhea" id="RHEA:12068"/>
        <dbReference type="Rhea" id="RHEA-COMP:9685"/>
        <dbReference type="Rhea" id="RHEA-COMP:9690"/>
        <dbReference type="ChEBI" id="CHEBI:15378"/>
        <dbReference type="ChEBI" id="CHEBI:29999"/>
        <dbReference type="ChEBI" id="CHEBI:57287"/>
        <dbReference type="ChEBI" id="CHEBI:58343"/>
        <dbReference type="ChEBI" id="CHEBI:64479"/>
        <dbReference type="EC" id="2.7.8.7"/>
    </reaction>
</comment>
<comment type="cofactor">
    <cofactor evidence="1">
        <name>Mg(2+)</name>
        <dbReference type="ChEBI" id="CHEBI:18420"/>
    </cofactor>
</comment>
<comment type="subcellular location">
    <subcellularLocation>
        <location evidence="1">Cytoplasm</location>
    </subcellularLocation>
</comment>
<comment type="similarity">
    <text evidence="1">Belongs to the P-Pant transferase superfamily. AcpS family.</text>
</comment>
<gene>
    <name evidence="1" type="primary">acpS</name>
    <name type="synonym">dpj</name>
    <name type="ordered locus">NMA2033</name>
</gene>
<feature type="chain" id="PRO_0000175676" description="Holo-[acyl-carrier-protein] synthase">
    <location>
        <begin position="1"/>
        <end position="125"/>
    </location>
</feature>
<feature type="binding site" evidence="1">
    <location>
        <position position="8"/>
    </location>
    <ligand>
        <name>Mg(2+)</name>
        <dbReference type="ChEBI" id="CHEBI:18420"/>
    </ligand>
</feature>
<feature type="binding site" evidence="1">
    <location>
        <position position="57"/>
    </location>
    <ligand>
        <name>Mg(2+)</name>
        <dbReference type="ChEBI" id="CHEBI:18420"/>
    </ligand>
</feature>
<organism>
    <name type="scientific">Neisseria meningitidis serogroup A / serotype 4A (strain DSM 15465 / Z2491)</name>
    <dbReference type="NCBI Taxonomy" id="122587"/>
    <lineage>
        <taxon>Bacteria</taxon>
        <taxon>Pseudomonadati</taxon>
        <taxon>Pseudomonadota</taxon>
        <taxon>Betaproteobacteria</taxon>
        <taxon>Neisseriales</taxon>
        <taxon>Neisseriaceae</taxon>
        <taxon>Neisseria</taxon>
    </lineage>
</organism>
<proteinExistence type="inferred from homology"/>
<name>ACPS_NEIMA</name>
<accession>Q9RQW2</accession>
<accession>A1ITM1</accession>
<reference key="1">
    <citation type="journal article" date="2000" name="Nature">
        <title>Complete DNA sequence of a serogroup A strain of Neisseria meningitidis Z2491.</title>
        <authorList>
            <person name="Parkhill J."/>
            <person name="Achtman M."/>
            <person name="James K.D."/>
            <person name="Bentley S.D."/>
            <person name="Churcher C.M."/>
            <person name="Klee S.R."/>
            <person name="Morelli G."/>
            <person name="Basham D."/>
            <person name="Brown D."/>
            <person name="Chillingworth T."/>
            <person name="Davies R.M."/>
            <person name="Davis P."/>
            <person name="Devlin K."/>
            <person name="Feltwell T."/>
            <person name="Hamlin N."/>
            <person name="Holroyd S."/>
            <person name="Jagels K."/>
            <person name="Leather S."/>
            <person name="Moule S."/>
            <person name="Mungall K.L."/>
            <person name="Quail M.A."/>
            <person name="Rajandream M.A."/>
            <person name="Rutherford K.M."/>
            <person name="Simmonds M."/>
            <person name="Skelton J."/>
            <person name="Whitehead S."/>
            <person name="Spratt B.G."/>
            <person name="Barrell B.G."/>
        </authorList>
    </citation>
    <scope>NUCLEOTIDE SEQUENCE [LARGE SCALE GENOMIC DNA]</scope>
    <source>
        <strain>DSM 15465 / Z2491</strain>
    </source>
</reference>
<keyword id="KW-0963">Cytoplasm</keyword>
<keyword id="KW-0275">Fatty acid biosynthesis</keyword>
<keyword id="KW-0276">Fatty acid metabolism</keyword>
<keyword id="KW-0444">Lipid biosynthesis</keyword>
<keyword id="KW-0443">Lipid metabolism</keyword>
<keyword id="KW-0460">Magnesium</keyword>
<keyword id="KW-0479">Metal-binding</keyword>
<keyword id="KW-0808">Transferase</keyword>
<protein>
    <recommendedName>
        <fullName evidence="1">Holo-[acyl-carrier-protein] synthase</fullName>
        <shortName evidence="1">Holo-ACP synthase</shortName>
        <ecNumber evidence="1">2.7.8.7</ecNumber>
    </recommendedName>
    <alternativeName>
        <fullName evidence="1">4'-phosphopantetheinyl transferase AcpS</fullName>
    </alternativeName>
</protein>
<dbReference type="EC" id="2.7.8.7" evidence="1"/>
<dbReference type="EMBL" id="AF058689">
    <property type="protein sequence ID" value="AAF06685.1"/>
    <property type="molecule type" value="Genomic_DNA"/>
</dbReference>
<dbReference type="EMBL" id="AL157959">
    <property type="protein sequence ID" value="CAM09138.1"/>
    <property type="molecule type" value="Genomic_DNA"/>
</dbReference>
<dbReference type="PIR" id="D81833">
    <property type="entry name" value="D81833"/>
</dbReference>
<dbReference type="RefSeq" id="WP_002245911.1">
    <property type="nucleotide sequence ID" value="NC_003116.1"/>
</dbReference>
<dbReference type="SMR" id="Q9RQW2"/>
<dbReference type="EnsemblBacteria" id="CAM09138">
    <property type="protein sequence ID" value="CAM09138"/>
    <property type="gene ID" value="NMA2033"/>
</dbReference>
<dbReference type="GeneID" id="93387546"/>
<dbReference type="KEGG" id="nma:NMA2033"/>
<dbReference type="HOGENOM" id="CLU_089696_3_1_4"/>
<dbReference type="Proteomes" id="UP000000626">
    <property type="component" value="Chromosome"/>
</dbReference>
<dbReference type="GO" id="GO:0005737">
    <property type="term" value="C:cytoplasm"/>
    <property type="evidence" value="ECO:0007669"/>
    <property type="project" value="UniProtKB-SubCell"/>
</dbReference>
<dbReference type="GO" id="GO:0008897">
    <property type="term" value="F:holo-[acyl-carrier-protein] synthase activity"/>
    <property type="evidence" value="ECO:0007669"/>
    <property type="project" value="UniProtKB-UniRule"/>
</dbReference>
<dbReference type="GO" id="GO:0000287">
    <property type="term" value="F:magnesium ion binding"/>
    <property type="evidence" value="ECO:0007669"/>
    <property type="project" value="UniProtKB-UniRule"/>
</dbReference>
<dbReference type="GO" id="GO:0006633">
    <property type="term" value="P:fatty acid biosynthetic process"/>
    <property type="evidence" value="ECO:0007669"/>
    <property type="project" value="UniProtKB-UniRule"/>
</dbReference>
<dbReference type="Gene3D" id="3.90.470.20">
    <property type="entry name" value="4'-phosphopantetheinyl transferase domain"/>
    <property type="match status" value="1"/>
</dbReference>
<dbReference type="HAMAP" id="MF_00101">
    <property type="entry name" value="AcpS"/>
    <property type="match status" value="1"/>
</dbReference>
<dbReference type="InterPro" id="IPR008278">
    <property type="entry name" value="4-PPantetheinyl_Trfase_dom"/>
</dbReference>
<dbReference type="InterPro" id="IPR037143">
    <property type="entry name" value="4-PPantetheinyl_Trfase_dom_sf"/>
</dbReference>
<dbReference type="InterPro" id="IPR002582">
    <property type="entry name" value="ACPS"/>
</dbReference>
<dbReference type="InterPro" id="IPR004568">
    <property type="entry name" value="Ppantetheine-prot_Trfase_dom"/>
</dbReference>
<dbReference type="NCBIfam" id="TIGR00516">
    <property type="entry name" value="acpS"/>
    <property type="match status" value="1"/>
</dbReference>
<dbReference type="NCBIfam" id="TIGR00556">
    <property type="entry name" value="pantethn_trn"/>
    <property type="match status" value="1"/>
</dbReference>
<dbReference type="Pfam" id="PF01648">
    <property type="entry name" value="ACPS"/>
    <property type="match status" value="1"/>
</dbReference>
<dbReference type="SUPFAM" id="SSF56214">
    <property type="entry name" value="4'-phosphopantetheinyl transferase"/>
    <property type="match status" value="1"/>
</dbReference>
<evidence type="ECO:0000255" key="1">
    <source>
        <dbReference type="HAMAP-Rule" id="MF_00101"/>
    </source>
</evidence>